<reference key="1">
    <citation type="journal article" date="2011" name="Genome Biol.">
        <title>Comparative and functional genomics provide insights into the pathogenicity of dermatophytic fungi.</title>
        <authorList>
            <person name="Burmester A."/>
            <person name="Shelest E."/>
            <person name="Gloeckner G."/>
            <person name="Heddergott C."/>
            <person name="Schindler S."/>
            <person name="Staib P."/>
            <person name="Heidel A."/>
            <person name="Felder M."/>
            <person name="Petzold A."/>
            <person name="Szafranski K."/>
            <person name="Feuermann M."/>
            <person name="Pedruzzi I."/>
            <person name="Priebe S."/>
            <person name="Groth M."/>
            <person name="Winkler R."/>
            <person name="Li W."/>
            <person name="Kniemeyer O."/>
            <person name="Schroeckh V."/>
            <person name="Hertweck C."/>
            <person name="Hube B."/>
            <person name="White T.C."/>
            <person name="Platzer M."/>
            <person name="Guthke R."/>
            <person name="Heitman J."/>
            <person name="Woestemeyer J."/>
            <person name="Zipfel P.F."/>
            <person name="Monod M."/>
            <person name="Brakhage A.A."/>
        </authorList>
    </citation>
    <scope>NUCLEOTIDE SEQUENCE [LARGE SCALE GENOMIC DNA]</scope>
    <source>
        <strain>ATCC MYA-4681 / CBS 112371</strain>
    </source>
</reference>
<reference key="2">
    <citation type="journal article" date="2011" name="Proteomics">
        <title>Identification of novel secreted proteases during extracellular proteolysis by dermatophytes at acidic pH.</title>
        <authorList>
            <person name="Sriranganadane D."/>
            <person name="Waridel P."/>
            <person name="Salamin K."/>
            <person name="Feuermann M."/>
            <person name="Mignon B."/>
            <person name="Staib P."/>
            <person name="Neuhaus J.M."/>
            <person name="Quadroni M."/>
            <person name="Monod M."/>
        </authorList>
    </citation>
    <scope>IDENTIFICATION BY MASS SPECTROMETRY</scope>
    <scope>SUBCELLULAR LOCATION</scope>
</reference>
<feature type="signal peptide" evidence="1">
    <location>
        <begin position="1"/>
        <end position="19"/>
    </location>
</feature>
<feature type="chain" id="PRO_0000434666" description="Uncharacterized secreted protein ARB_03673" evidence="1">
    <location>
        <begin position="20"/>
        <end position="197"/>
    </location>
</feature>
<organism>
    <name type="scientific">Arthroderma benhamiae (strain ATCC MYA-4681 / CBS 112371)</name>
    <name type="common">Trichophyton mentagrophytes</name>
    <dbReference type="NCBI Taxonomy" id="663331"/>
    <lineage>
        <taxon>Eukaryota</taxon>
        <taxon>Fungi</taxon>
        <taxon>Dikarya</taxon>
        <taxon>Ascomycota</taxon>
        <taxon>Pezizomycotina</taxon>
        <taxon>Eurotiomycetes</taxon>
        <taxon>Eurotiomycetidae</taxon>
        <taxon>Onygenales</taxon>
        <taxon>Arthrodermataceae</taxon>
        <taxon>Trichophyton</taxon>
    </lineage>
</organism>
<dbReference type="EMBL" id="ABSU01000039">
    <property type="protein sequence ID" value="EFE29466.1"/>
    <property type="molecule type" value="Genomic_DNA"/>
</dbReference>
<dbReference type="RefSeq" id="XP_003010106.1">
    <property type="nucleotide sequence ID" value="XM_003010060.1"/>
</dbReference>
<dbReference type="GeneID" id="9525374"/>
<dbReference type="KEGG" id="abe:ARB_03673"/>
<dbReference type="eggNOG" id="ENOG502RQSU">
    <property type="taxonomic scope" value="Eukaryota"/>
</dbReference>
<dbReference type="HOGENOM" id="CLU_1467838_0_0_1"/>
<dbReference type="OMA" id="FEQSAIQ"/>
<dbReference type="Proteomes" id="UP000008866">
    <property type="component" value="Unassembled WGS sequence"/>
</dbReference>
<dbReference type="GO" id="GO:0005576">
    <property type="term" value="C:extracellular region"/>
    <property type="evidence" value="ECO:0007669"/>
    <property type="project" value="UniProtKB-SubCell"/>
</dbReference>
<comment type="subcellular location">
    <subcellularLocation>
        <location evidence="2">Secreted</location>
    </subcellularLocation>
</comment>
<sequence length="197" mass="21039">MKLASLLVGSLMLAVPALAFEQSAIQTLRDATTATGAYHSKFPHALSEGPEAAISNINSATARAADEAKTAMTGLTVQSQSLAGALKGVSWISPHVLVVLFMPKYGVLTMFVWQFFDAMTTLSHDATNPAVFCSKNIDRLGPSMGWNLRLPHATTLKRDCKDGEKLVADLAGSYKIAVDSLEQAQAMLESPQGKCKQ</sequence>
<evidence type="ECO:0000255" key="1"/>
<evidence type="ECO:0000269" key="2">
    <source>
    </source>
</evidence>
<proteinExistence type="evidence at protein level"/>
<name>A3673_ARTBC</name>
<keyword id="KW-1185">Reference proteome</keyword>
<keyword id="KW-0964">Secreted</keyword>
<keyword id="KW-0732">Signal</keyword>
<accession>D4B5D3</accession>
<gene>
    <name type="ORF">ARB_03673</name>
</gene>
<protein>
    <recommendedName>
        <fullName>Uncharacterized secreted protein ARB_03673</fullName>
    </recommendedName>
</protein>